<protein>
    <recommendedName>
        <fullName evidence="1">ATP synthase subunit b', chloroplastic</fullName>
    </recommendedName>
    <alternativeName>
        <fullName evidence="1">ATP synthase F(0) sector subunit b'</fullName>
    </alternativeName>
    <alternativeName>
        <fullName evidence="1">ATPase subunit II</fullName>
    </alternativeName>
</protein>
<geneLocation type="chloroplast"/>
<name>ATPF2_ANTSP</name>
<feature type="chain" id="PRO_0000082432" description="ATP synthase subunit b', chloroplastic">
    <location>
        <begin position="1"/>
        <end position="159"/>
    </location>
</feature>
<feature type="transmembrane region" description="Helical" evidence="1">
    <location>
        <begin position="30"/>
        <end position="47"/>
    </location>
</feature>
<evidence type="ECO:0000255" key="1">
    <source>
        <dbReference type="HAMAP-Rule" id="MF_01399"/>
    </source>
</evidence>
<accession>Q02852</accession>
<dbReference type="EMBL" id="X63382">
    <property type="protein sequence ID" value="CAA44981.1"/>
    <property type="molecule type" value="Genomic_DNA"/>
</dbReference>
<dbReference type="PIR" id="S26959">
    <property type="entry name" value="S26959"/>
</dbReference>
<dbReference type="SMR" id="Q02852"/>
<dbReference type="GO" id="GO:0009535">
    <property type="term" value="C:chloroplast thylakoid membrane"/>
    <property type="evidence" value="ECO:0007669"/>
    <property type="project" value="UniProtKB-SubCell"/>
</dbReference>
<dbReference type="GO" id="GO:0045259">
    <property type="term" value="C:proton-transporting ATP synthase complex"/>
    <property type="evidence" value="ECO:0007669"/>
    <property type="project" value="UniProtKB-KW"/>
</dbReference>
<dbReference type="GO" id="GO:0046933">
    <property type="term" value="F:proton-transporting ATP synthase activity, rotational mechanism"/>
    <property type="evidence" value="ECO:0007669"/>
    <property type="project" value="UniProtKB-UniRule"/>
</dbReference>
<dbReference type="GO" id="GO:0046961">
    <property type="term" value="F:proton-transporting ATPase activity, rotational mechanism"/>
    <property type="evidence" value="ECO:0007669"/>
    <property type="project" value="TreeGrafter"/>
</dbReference>
<dbReference type="CDD" id="cd06503">
    <property type="entry name" value="ATP-synt_Fo_b"/>
    <property type="match status" value="1"/>
</dbReference>
<dbReference type="Gene3D" id="6.10.250.1580">
    <property type="match status" value="1"/>
</dbReference>
<dbReference type="HAMAP" id="MF_01398">
    <property type="entry name" value="ATP_synth_b_bprime"/>
    <property type="match status" value="1"/>
</dbReference>
<dbReference type="HAMAP" id="MF_01399">
    <property type="entry name" value="ATP_synth_bprime"/>
    <property type="match status" value="1"/>
</dbReference>
<dbReference type="InterPro" id="IPR034679">
    <property type="entry name" value="ATP_synth_b"/>
</dbReference>
<dbReference type="InterPro" id="IPR028987">
    <property type="entry name" value="ATP_synth_B-like_membr_sf"/>
</dbReference>
<dbReference type="InterPro" id="IPR002146">
    <property type="entry name" value="ATP_synth_b/b'su_bac/chlpt"/>
</dbReference>
<dbReference type="InterPro" id="IPR005864">
    <property type="entry name" value="ATP_synth_F0_bsu_bac"/>
</dbReference>
<dbReference type="InterPro" id="IPR050059">
    <property type="entry name" value="ATP_synthase_B_chain"/>
</dbReference>
<dbReference type="NCBIfam" id="TIGR01144">
    <property type="entry name" value="ATP_synt_b"/>
    <property type="match status" value="1"/>
</dbReference>
<dbReference type="NCBIfam" id="NF005607">
    <property type="entry name" value="PRK07353.1"/>
    <property type="match status" value="1"/>
</dbReference>
<dbReference type="PANTHER" id="PTHR33445">
    <property type="entry name" value="ATP SYNTHASE SUBUNIT B', CHLOROPLASTIC"/>
    <property type="match status" value="1"/>
</dbReference>
<dbReference type="PANTHER" id="PTHR33445:SF2">
    <property type="entry name" value="ATP SYNTHASE SUBUNIT B', CHLOROPLASTIC"/>
    <property type="match status" value="1"/>
</dbReference>
<dbReference type="Pfam" id="PF00430">
    <property type="entry name" value="ATP-synt_B"/>
    <property type="match status" value="1"/>
</dbReference>
<dbReference type="SUPFAM" id="SSF81573">
    <property type="entry name" value="F1F0 ATP synthase subunit B, membrane domain"/>
    <property type="match status" value="1"/>
</dbReference>
<organism>
    <name type="scientific">Antithamnion sp.</name>
    <name type="common">Red alga</name>
    <dbReference type="NCBI Taxonomy" id="2767"/>
    <lineage>
        <taxon>Eukaryota</taxon>
        <taxon>Rhodophyta</taxon>
        <taxon>Florideophyceae</taxon>
        <taxon>Rhodymeniophycidae</taxon>
        <taxon>Ceramiales</taxon>
        <taxon>Ceramiaceae</taxon>
        <taxon>Antithamnion</taxon>
    </lineage>
</organism>
<reference key="1">
    <citation type="journal article" date="1992" name="J. Mol. Biol.">
        <title>Large ATP synthase operon of the red alga Antithamnion sp. resembles the corresponding operon in cyanobacteria.</title>
        <authorList>
            <person name="Kostrzewa M."/>
            <person name="Zetsche K."/>
        </authorList>
    </citation>
    <scope>NUCLEOTIDE SEQUENCE [GENOMIC DNA]</scope>
    <source>
        <strain>LB 95.79</strain>
    </source>
</reference>
<proteinExistence type="inferred from homology"/>
<gene>
    <name evidence="1" type="primary">atpF2</name>
    <name evidence="1" type="synonym">atpG</name>
</gene>
<comment type="function">
    <text evidence="1">F(1)F(0) ATP synthase produces ATP from ADP in the presence of a proton or sodium gradient. F-type ATPases consist of two structural domains, F(1) containing the extramembraneous catalytic core and F(0) containing the membrane proton channel, linked together by a central stalk and a peripheral stalk. During catalysis, ATP synthesis in the catalytic domain of F(1) is coupled via a rotary mechanism of the central stalk subunits to proton translocation.</text>
</comment>
<comment type="function">
    <text evidence="1">Component of the F(0) channel, it forms part of the peripheral stalk, linking F(1) to F(0). The b'-subunit is a diverged and duplicated form of b found in plants and photosynthetic bacteria.</text>
</comment>
<comment type="subunit">
    <text evidence="1">F-type ATPases have 2 components, F(1) - the catalytic core - and F(0) - the membrane proton channel. F(1) has five subunits: alpha(3), beta(3), gamma(1), delta(1), epsilon(1). F(0) has four main subunits: a(1), b(1), b'(1) and c(10-14). The alpha and beta chains form an alternating ring which encloses part of the gamma chain. F(1) is attached to F(0) by a central stalk formed by the gamma and epsilon chains, while a peripheral stalk is formed by the delta, b and b' chains.</text>
</comment>
<comment type="subcellular location">
    <subcellularLocation>
        <location evidence="1">Plastid</location>
        <location evidence="1">Chloroplast thylakoid membrane</location>
        <topology evidence="1">Single-pass membrane protein</topology>
    </subcellularLocation>
</comment>
<comment type="miscellaneous">
    <text>In plastids the F-type ATPase is also known as CF(1)CF(0).</text>
</comment>
<comment type="similarity">
    <text evidence="1">Belongs to the ATPase B chain family.</text>
</comment>
<sequence length="159" mass="17833">MNNFLISLALQESSTEVQGGLFDFNATLPLMALQFLALTIILNLIYYKPLGKILDERDEYIANSLTAASAALSKANDLTKRYEQDLAESRKKAQDIIKNAQQDAQNIVSSKIKEAQKDADQLMSNTYDQLNIQKEQALQNLEKQVDILSNQIQIKLLGN</sequence>
<keyword id="KW-0066">ATP synthesis</keyword>
<keyword id="KW-0138">CF(0)</keyword>
<keyword id="KW-0150">Chloroplast</keyword>
<keyword id="KW-0375">Hydrogen ion transport</keyword>
<keyword id="KW-0406">Ion transport</keyword>
<keyword id="KW-0472">Membrane</keyword>
<keyword id="KW-0934">Plastid</keyword>
<keyword id="KW-0793">Thylakoid</keyword>
<keyword id="KW-0812">Transmembrane</keyword>
<keyword id="KW-1133">Transmembrane helix</keyword>
<keyword id="KW-0813">Transport</keyword>